<name>RSMB_CROS8</name>
<organism>
    <name type="scientific">Cronobacter sakazakii (strain ATCC BAA-894)</name>
    <name type="common">Enterobacter sakazakii</name>
    <dbReference type="NCBI Taxonomy" id="290339"/>
    <lineage>
        <taxon>Bacteria</taxon>
        <taxon>Pseudomonadati</taxon>
        <taxon>Pseudomonadota</taxon>
        <taxon>Gammaproteobacteria</taxon>
        <taxon>Enterobacterales</taxon>
        <taxon>Enterobacteriaceae</taxon>
        <taxon>Cronobacter</taxon>
    </lineage>
</organism>
<dbReference type="EC" id="2.1.1.176" evidence="1"/>
<dbReference type="EMBL" id="CP000783">
    <property type="protein sequence ID" value="ABU75346.1"/>
    <property type="molecule type" value="Genomic_DNA"/>
</dbReference>
<dbReference type="RefSeq" id="WP_012123587.1">
    <property type="nucleotide sequence ID" value="NC_009778.1"/>
</dbReference>
<dbReference type="SMR" id="A7MPE7"/>
<dbReference type="KEGG" id="esa:ESA_00037"/>
<dbReference type="PATRIC" id="fig|290339.8.peg.35"/>
<dbReference type="HOGENOM" id="CLU_005316_0_4_6"/>
<dbReference type="Proteomes" id="UP000000260">
    <property type="component" value="Chromosome"/>
</dbReference>
<dbReference type="GO" id="GO:0005829">
    <property type="term" value="C:cytosol"/>
    <property type="evidence" value="ECO:0007669"/>
    <property type="project" value="TreeGrafter"/>
</dbReference>
<dbReference type="GO" id="GO:0003723">
    <property type="term" value="F:RNA binding"/>
    <property type="evidence" value="ECO:0007669"/>
    <property type="project" value="UniProtKB-KW"/>
</dbReference>
<dbReference type="GO" id="GO:0009383">
    <property type="term" value="F:rRNA (cytosine-C5-)-methyltransferase activity"/>
    <property type="evidence" value="ECO:0007669"/>
    <property type="project" value="TreeGrafter"/>
</dbReference>
<dbReference type="GO" id="GO:0006355">
    <property type="term" value="P:regulation of DNA-templated transcription"/>
    <property type="evidence" value="ECO:0007669"/>
    <property type="project" value="InterPro"/>
</dbReference>
<dbReference type="GO" id="GO:0070475">
    <property type="term" value="P:rRNA base methylation"/>
    <property type="evidence" value="ECO:0007669"/>
    <property type="project" value="TreeGrafter"/>
</dbReference>
<dbReference type="CDD" id="cd02440">
    <property type="entry name" value="AdoMet_MTases"/>
    <property type="match status" value="1"/>
</dbReference>
<dbReference type="CDD" id="cd00620">
    <property type="entry name" value="Methyltransferase_Sun"/>
    <property type="match status" value="1"/>
</dbReference>
<dbReference type="FunFam" id="1.10.940.10:FF:000002">
    <property type="entry name" value="Ribosomal RNA small subunit methyltransferase B"/>
    <property type="match status" value="1"/>
</dbReference>
<dbReference type="FunFam" id="3.30.70.1170:FF:000002">
    <property type="entry name" value="Ribosomal RNA small subunit methyltransferase B"/>
    <property type="match status" value="1"/>
</dbReference>
<dbReference type="FunFam" id="3.40.50.150:FF:000022">
    <property type="entry name" value="Ribosomal RNA small subunit methyltransferase B"/>
    <property type="match status" value="1"/>
</dbReference>
<dbReference type="Gene3D" id="1.10.287.730">
    <property type="entry name" value="Helix hairpin bin"/>
    <property type="match status" value="1"/>
</dbReference>
<dbReference type="Gene3D" id="1.10.940.10">
    <property type="entry name" value="NusB-like"/>
    <property type="match status" value="1"/>
</dbReference>
<dbReference type="Gene3D" id="3.30.70.1170">
    <property type="entry name" value="Sun protein, domain 3"/>
    <property type="match status" value="1"/>
</dbReference>
<dbReference type="Gene3D" id="3.40.50.150">
    <property type="entry name" value="Vaccinia Virus protein VP39"/>
    <property type="match status" value="1"/>
</dbReference>
<dbReference type="HAMAP" id="MF_01856">
    <property type="entry name" value="16SrRNA_methyltr_B"/>
    <property type="match status" value="1"/>
</dbReference>
<dbReference type="InterPro" id="IPR049560">
    <property type="entry name" value="MeTrfase_RsmB-F_NOP2_cat"/>
</dbReference>
<dbReference type="InterPro" id="IPR001678">
    <property type="entry name" value="MeTrfase_RsmB-F_NOP2_dom"/>
</dbReference>
<dbReference type="InterPro" id="IPR035926">
    <property type="entry name" value="NusB-like_sf"/>
</dbReference>
<dbReference type="InterPro" id="IPR006027">
    <property type="entry name" value="NusB_RsmB_TIM44"/>
</dbReference>
<dbReference type="InterPro" id="IPR023267">
    <property type="entry name" value="RCMT"/>
</dbReference>
<dbReference type="InterPro" id="IPR004573">
    <property type="entry name" value="rRNA_ssu_MeTfrase_B"/>
</dbReference>
<dbReference type="InterPro" id="IPR023541">
    <property type="entry name" value="rRNA_ssu_MeTfrase_B_ent"/>
</dbReference>
<dbReference type="InterPro" id="IPR054728">
    <property type="entry name" value="RsmB-like_ferredoxin"/>
</dbReference>
<dbReference type="InterPro" id="IPR048019">
    <property type="entry name" value="RsmB-like_N"/>
</dbReference>
<dbReference type="InterPro" id="IPR018314">
    <property type="entry name" value="RsmB/NOL1/NOP2-like_CS"/>
</dbReference>
<dbReference type="InterPro" id="IPR029063">
    <property type="entry name" value="SAM-dependent_MTases_sf"/>
</dbReference>
<dbReference type="NCBIfam" id="NF008149">
    <property type="entry name" value="PRK10901.1"/>
    <property type="match status" value="1"/>
</dbReference>
<dbReference type="NCBIfam" id="NF011494">
    <property type="entry name" value="PRK14902.1"/>
    <property type="match status" value="1"/>
</dbReference>
<dbReference type="NCBIfam" id="TIGR00563">
    <property type="entry name" value="rsmB"/>
    <property type="match status" value="1"/>
</dbReference>
<dbReference type="PANTHER" id="PTHR22807:SF61">
    <property type="entry name" value="NOL1_NOP2_SUN FAMILY PROTEIN _ ANTITERMINATION NUSB DOMAIN-CONTAINING PROTEIN"/>
    <property type="match status" value="1"/>
</dbReference>
<dbReference type="PANTHER" id="PTHR22807">
    <property type="entry name" value="NOP2 YEAST -RELATED NOL1/NOP2/FMU SUN DOMAIN-CONTAINING"/>
    <property type="match status" value="1"/>
</dbReference>
<dbReference type="Pfam" id="PF01189">
    <property type="entry name" value="Methyltr_RsmB-F"/>
    <property type="match status" value="1"/>
</dbReference>
<dbReference type="Pfam" id="PF01029">
    <property type="entry name" value="NusB"/>
    <property type="match status" value="1"/>
</dbReference>
<dbReference type="Pfam" id="PF22458">
    <property type="entry name" value="RsmF-B_ferredox"/>
    <property type="match status" value="1"/>
</dbReference>
<dbReference type="PRINTS" id="PR02008">
    <property type="entry name" value="RCMTFAMILY"/>
</dbReference>
<dbReference type="SUPFAM" id="SSF48013">
    <property type="entry name" value="NusB-like"/>
    <property type="match status" value="1"/>
</dbReference>
<dbReference type="SUPFAM" id="SSF53335">
    <property type="entry name" value="S-adenosyl-L-methionine-dependent methyltransferases"/>
    <property type="match status" value="1"/>
</dbReference>
<dbReference type="PROSITE" id="PS01153">
    <property type="entry name" value="NOL1_NOP2_SUN"/>
    <property type="match status" value="1"/>
</dbReference>
<dbReference type="PROSITE" id="PS51686">
    <property type="entry name" value="SAM_MT_RSMB_NOP"/>
    <property type="match status" value="1"/>
</dbReference>
<gene>
    <name evidence="1" type="primary">rsmB</name>
    <name evidence="1" type="synonym">sun</name>
    <name type="ordered locus">ESA_00037</name>
</gene>
<comment type="function">
    <text evidence="1">Specifically methylates the cytosine at position 967 (m5C967) of 16S rRNA.</text>
</comment>
<comment type="catalytic activity">
    <reaction evidence="1">
        <text>cytidine(967) in 16S rRNA + S-adenosyl-L-methionine = 5-methylcytidine(967) in 16S rRNA + S-adenosyl-L-homocysteine + H(+)</text>
        <dbReference type="Rhea" id="RHEA:42748"/>
        <dbReference type="Rhea" id="RHEA-COMP:10219"/>
        <dbReference type="Rhea" id="RHEA-COMP:10220"/>
        <dbReference type="ChEBI" id="CHEBI:15378"/>
        <dbReference type="ChEBI" id="CHEBI:57856"/>
        <dbReference type="ChEBI" id="CHEBI:59789"/>
        <dbReference type="ChEBI" id="CHEBI:74483"/>
        <dbReference type="ChEBI" id="CHEBI:82748"/>
        <dbReference type="EC" id="2.1.1.176"/>
    </reaction>
</comment>
<comment type="subcellular location">
    <subcellularLocation>
        <location evidence="1">Cytoplasm</location>
    </subcellularLocation>
</comment>
<comment type="similarity">
    <text evidence="1">Belongs to the class I-like SAM-binding methyltransferase superfamily. RsmB/NOP family.</text>
</comment>
<evidence type="ECO:0000255" key="1">
    <source>
        <dbReference type="HAMAP-Rule" id="MF_01856"/>
    </source>
</evidence>
<protein>
    <recommendedName>
        <fullName evidence="1">Ribosomal RNA small subunit methyltransferase B</fullName>
        <ecNumber evidence="1">2.1.1.176</ecNumber>
    </recommendedName>
    <alternativeName>
        <fullName evidence="1">16S rRNA m5C967 methyltransferase</fullName>
    </alternativeName>
    <alternativeName>
        <fullName evidence="1">rRNA (cytosine-C(5)-)-methyltransferase RsmB</fullName>
    </alternativeName>
</protein>
<accession>A7MPE7</accession>
<reference key="1">
    <citation type="journal article" date="2010" name="PLoS ONE">
        <title>Genome sequence of Cronobacter sakazakii BAA-894 and comparative genomic hybridization analysis with other Cronobacter species.</title>
        <authorList>
            <person name="Kucerova E."/>
            <person name="Clifton S.W."/>
            <person name="Xia X.Q."/>
            <person name="Long F."/>
            <person name="Porwollik S."/>
            <person name="Fulton L."/>
            <person name="Fronick C."/>
            <person name="Minx P."/>
            <person name="Kyung K."/>
            <person name="Warren W."/>
            <person name="Fulton R."/>
            <person name="Feng D."/>
            <person name="Wollam A."/>
            <person name="Shah N."/>
            <person name="Bhonagiri V."/>
            <person name="Nash W.E."/>
            <person name="Hallsworth-Pepin K."/>
            <person name="Wilson R.K."/>
            <person name="McClelland M."/>
            <person name="Forsythe S.J."/>
        </authorList>
    </citation>
    <scope>NUCLEOTIDE SEQUENCE [LARGE SCALE GENOMIC DNA]</scope>
    <source>
        <strain>ATCC BAA-894</strain>
    </source>
</reference>
<keyword id="KW-0963">Cytoplasm</keyword>
<keyword id="KW-0489">Methyltransferase</keyword>
<keyword id="KW-1185">Reference proteome</keyword>
<keyword id="KW-0694">RNA-binding</keyword>
<keyword id="KW-0698">rRNA processing</keyword>
<keyword id="KW-0949">S-adenosyl-L-methionine</keyword>
<keyword id="KW-0808">Transferase</keyword>
<sequence length="429" mass="48163">MKKSINLRSLAAQAIEQVVEKGQSLSTVLPPLQHKVSDKDKALLQELCFGVLRTLSQLEWLINKLMSRPMTGKQRTIHYLIMVGLYQLLYTRIPPHAALAETVEGAVAIKRMQFKGLINGVLRQFQRQQDELLAEFSGQDARWLHPMWLLNRFQTAWPREWQAVVEANNERPPMWLRVNRQHHSRDEWLKLLEENGMTGHIHPRYPDAVRLDAPAPVSALPGFEQGWVTVQDASAQGCVELLAPQNGETILDLCAAPGGKTTHILEAAPQASVMAVDVDAQRISRVYENLKRLKMKADVKVGDGRFPSTWCGETQFDRILLDAPCSATGVIRRHPDIKWLRRDSDINELAQLQSEILDAIWPHLKPGGTLLYATCSVLPEENSEQIRAFLSRTPDAQLDGTGSTQTPGIQNLPGATEGDGFFYAKLIKK</sequence>
<proteinExistence type="inferred from homology"/>
<feature type="chain" id="PRO_0000366147" description="Ribosomal RNA small subunit methyltransferase B">
    <location>
        <begin position="1"/>
        <end position="429"/>
    </location>
</feature>
<feature type="active site" description="Nucleophile" evidence="1">
    <location>
        <position position="375"/>
    </location>
</feature>
<feature type="binding site" evidence="1">
    <location>
        <begin position="254"/>
        <end position="260"/>
    </location>
    <ligand>
        <name>S-adenosyl-L-methionine</name>
        <dbReference type="ChEBI" id="CHEBI:59789"/>
    </ligand>
</feature>
<feature type="binding site" evidence="1">
    <location>
        <position position="277"/>
    </location>
    <ligand>
        <name>S-adenosyl-L-methionine</name>
        <dbReference type="ChEBI" id="CHEBI:59789"/>
    </ligand>
</feature>
<feature type="binding site" evidence="1">
    <location>
        <position position="303"/>
    </location>
    <ligand>
        <name>S-adenosyl-L-methionine</name>
        <dbReference type="ChEBI" id="CHEBI:59789"/>
    </ligand>
</feature>
<feature type="binding site" evidence="1">
    <location>
        <position position="322"/>
    </location>
    <ligand>
        <name>S-adenosyl-L-methionine</name>
        <dbReference type="ChEBI" id="CHEBI:59789"/>
    </ligand>
</feature>